<feature type="chain" id="PRO_1000116704" description="Elongation factor Ts">
    <location>
        <begin position="1"/>
        <end position="293"/>
    </location>
</feature>
<feature type="region of interest" description="Involved in Mg(2+) ion dislocation from EF-Tu" evidence="1">
    <location>
        <begin position="80"/>
        <end position="83"/>
    </location>
</feature>
<reference key="1">
    <citation type="submission" date="2007-10" db="EMBL/GenBank/DDBJ databases">
        <title>Complete sequence of chromosome 1 of Burkholderia multivorans ATCC 17616.</title>
        <authorList>
            <person name="Copeland A."/>
            <person name="Lucas S."/>
            <person name="Lapidus A."/>
            <person name="Barry K."/>
            <person name="Glavina del Rio T."/>
            <person name="Dalin E."/>
            <person name="Tice H."/>
            <person name="Pitluck S."/>
            <person name="Chain P."/>
            <person name="Malfatti S."/>
            <person name="Shin M."/>
            <person name="Vergez L."/>
            <person name="Schmutz J."/>
            <person name="Larimer F."/>
            <person name="Land M."/>
            <person name="Hauser L."/>
            <person name="Kyrpides N."/>
            <person name="Kim E."/>
            <person name="Tiedje J."/>
            <person name="Richardson P."/>
        </authorList>
    </citation>
    <scope>NUCLEOTIDE SEQUENCE [LARGE SCALE GENOMIC DNA]</scope>
    <source>
        <strain>ATCC 17616 / 249</strain>
    </source>
</reference>
<reference key="2">
    <citation type="submission" date="2007-04" db="EMBL/GenBank/DDBJ databases">
        <title>Complete genome sequence of Burkholderia multivorans ATCC 17616.</title>
        <authorList>
            <person name="Ohtsubo Y."/>
            <person name="Yamashita A."/>
            <person name="Kurokawa K."/>
            <person name="Takami H."/>
            <person name="Yuhara S."/>
            <person name="Nishiyama E."/>
            <person name="Endo R."/>
            <person name="Miyazaki R."/>
            <person name="Ono A."/>
            <person name="Yano K."/>
            <person name="Ito M."/>
            <person name="Sota M."/>
            <person name="Yuji N."/>
            <person name="Hattori M."/>
            <person name="Tsuda M."/>
        </authorList>
    </citation>
    <scope>NUCLEOTIDE SEQUENCE [LARGE SCALE GENOMIC DNA]</scope>
    <source>
        <strain>ATCC 17616 / 249</strain>
    </source>
</reference>
<accession>A9AIL5</accession>
<sequence>MAAITASMVAELRAKTDAPMMECKKALTEADGDMAKAEELLRVKLGNKASKAASRVTAEGVVASFVGGNAGALVELNCETDFVAKNDDFNAFAKQVAELVATKNPVDVAALSALPLDGKTVDEVRLALVGKIGENISIRRFVRFETANKLATYLHGSRIGVMVEYTGADEQVGKDVAMHVAAMKPVSLSADEVPADLIEKERRVAEQKAAESGKPAEIVAKMVDGSVQKFLKEVSLLNQPFVKNDKQTIEQMLKAANAAVQKFALFVVGEGIEKRQDDFAAEVAAQVAAAKQQ</sequence>
<evidence type="ECO:0000255" key="1">
    <source>
        <dbReference type="HAMAP-Rule" id="MF_00050"/>
    </source>
</evidence>
<proteinExistence type="inferred from homology"/>
<organism>
    <name type="scientific">Burkholderia multivorans (strain ATCC 17616 / 249)</name>
    <dbReference type="NCBI Taxonomy" id="395019"/>
    <lineage>
        <taxon>Bacteria</taxon>
        <taxon>Pseudomonadati</taxon>
        <taxon>Pseudomonadota</taxon>
        <taxon>Betaproteobacteria</taxon>
        <taxon>Burkholderiales</taxon>
        <taxon>Burkholderiaceae</taxon>
        <taxon>Burkholderia</taxon>
        <taxon>Burkholderia cepacia complex</taxon>
    </lineage>
</organism>
<protein>
    <recommendedName>
        <fullName evidence="1">Elongation factor Ts</fullName>
        <shortName evidence="1">EF-Ts</shortName>
    </recommendedName>
</protein>
<gene>
    <name evidence="1" type="primary">tsf</name>
    <name type="ordered locus">Bmul_1258</name>
    <name type="ordered locus">BMULJ_01989</name>
</gene>
<dbReference type="EMBL" id="CP000868">
    <property type="protein sequence ID" value="ABX14946.1"/>
    <property type="molecule type" value="Genomic_DNA"/>
</dbReference>
<dbReference type="EMBL" id="AP009385">
    <property type="protein sequence ID" value="BAG43906.1"/>
    <property type="molecule type" value="Genomic_DNA"/>
</dbReference>
<dbReference type="RefSeq" id="WP_012213138.1">
    <property type="nucleotide sequence ID" value="NC_010084.1"/>
</dbReference>
<dbReference type="SMR" id="A9AIL5"/>
<dbReference type="STRING" id="395019.BMULJ_01989"/>
<dbReference type="KEGG" id="bmj:BMULJ_01989"/>
<dbReference type="KEGG" id="bmu:Bmul_1258"/>
<dbReference type="eggNOG" id="COG0264">
    <property type="taxonomic scope" value="Bacteria"/>
</dbReference>
<dbReference type="HOGENOM" id="CLU_047155_0_2_4"/>
<dbReference type="Proteomes" id="UP000008815">
    <property type="component" value="Chromosome 1"/>
</dbReference>
<dbReference type="GO" id="GO:0005737">
    <property type="term" value="C:cytoplasm"/>
    <property type="evidence" value="ECO:0007669"/>
    <property type="project" value="UniProtKB-SubCell"/>
</dbReference>
<dbReference type="GO" id="GO:0003746">
    <property type="term" value="F:translation elongation factor activity"/>
    <property type="evidence" value="ECO:0007669"/>
    <property type="project" value="UniProtKB-UniRule"/>
</dbReference>
<dbReference type="CDD" id="cd14275">
    <property type="entry name" value="UBA_EF-Ts"/>
    <property type="match status" value="1"/>
</dbReference>
<dbReference type="FunFam" id="1.10.286.20:FF:000001">
    <property type="entry name" value="Elongation factor Ts"/>
    <property type="match status" value="1"/>
</dbReference>
<dbReference type="FunFam" id="1.10.8.10:FF:000001">
    <property type="entry name" value="Elongation factor Ts"/>
    <property type="match status" value="1"/>
</dbReference>
<dbReference type="Gene3D" id="1.10.286.20">
    <property type="match status" value="1"/>
</dbReference>
<dbReference type="Gene3D" id="1.10.8.10">
    <property type="entry name" value="DNA helicase RuvA subunit, C-terminal domain"/>
    <property type="match status" value="1"/>
</dbReference>
<dbReference type="Gene3D" id="3.30.479.20">
    <property type="entry name" value="Elongation factor Ts, dimerisation domain"/>
    <property type="match status" value="2"/>
</dbReference>
<dbReference type="HAMAP" id="MF_00050">
    <property type="entry name" value="EF_Ts"/>
    <property type="match status" value="1"/>
</dbReference>
<dbReference type="InterPro" id="IPR036402">
    <property type="entry name" value="EF-Ts_dimer_sf"/>
</dbReference>
<dbReference type="InterPro" id="IPR001816">
    <property type="entry name" value="Transl_elong_EFTs/EF1B"/>
</dbReference>
<dbReference type="InterPro" id="IPR014039">
    <property type="entry name" value="Transl_elong_EFTs/EF1B_dimer"/>
</dbReference>
<dbReference type="InterPro" id="IPR018101">
    <property type="entry name" value="Transl_elong_Ts_CS"/>
</dbReference>
<dbReference type="InterPro" id="IPR009060">
    <property type="entry name" value="UBA-like_sf"/>
</dbReference>
<dbReference type="NCBIfam" id="TIGR00116">
    <property type="entry name" value="tsf"/>
    <property type="match status" value="1"/>
</dbReference>
<dbReference type="PANTHER" id="PTHR11741">
    <property type="entry name" value="ELONGATION FACTOR TS"/>
    <property type="match status" value="1"/>
</dbReference>
<dbReference type="PANTHER" id="PTHR11741:SF0">
    <property type="entry name" value="ELONGATION FACTOR TS, MITOCHONDRIAL"/>
    <property type="match status" value="1"/>
</dbReference>
<dbReference type="Pfam" id="PF00889">
    <property type="entry name" value="EF_TS"/>
    <property type="match status" value="1"/>
</dbReference>
<dbReference type="SUPFAM" id="SSF54713">
    <property type="entry name" value="Elongation factor Ts (EF-Ts), dimerisation domain"/>
    <property type="match status" value="2"/>
</dbReference>
<dbReference type="SUPFAM" id="SSF46934">
    <property type="entry name" value="UBA-like"/>
    <property type="match status" value="1"/>
</dbReference>
<dbReference type="PROSITE" id="PS01127">
    <property type="entry name" value="EF_TS_2"/>
    <property type="match status" value="1"/>
</dbReference>
<comment type="function">
    <text evidence="1">Associates with the EF-Tu.GDP complex and induces the exchange of GDP to GTP. It remains bound to the aminoacyl-tRNA.EF-Tu.GTP complex up to the GTP hydrolysis stage on the ribosome.</text>
</comment>
<comment type="subcellular location">
    <subcellularLocation>
        <location evidence="1">Cytoplasm</location>
    </subcellularLocation>
</comment>
<comment type="similarity">
    <text evidence="1">Belongs to the EF-Ts family.</text>
</comment>
<keyword id="KW-0963">Cytoplasm</keyword>
<keyword id="KW-0251">Elongation factor</keyword>
<keyword id="KW-0648">Protein biosynthesis</keyword>
<keyword id="KW-1185">Reference proteome</keyword>
<name>EFTS_BURM1</name>